<protein>
    <recommendedName>
        <fullName>Kinase and exchange factor for Rac A</fullName>
        <ecNumber>2.7.11.1</ecNumber>
    </recommendedName>
    <alternativeName>
        <fullName>Serine/threonine-protein kinase kxcA</fullName>
    </alternativeName>
</protein>
<proteinExistence type="inferred from homology"/>
<sequence>MVGGLPNSSLWNIEYDDLVFKDIIGKGNFGCVYRGNYLGVEVAIKQIPSFDDPDYCKYTEREVKALRYIRHPFVVHFFGACKHESGFYLITEFIEGLDLRRYLKSVPKPPKWLSRVNIALGVAKTFLFLHSKNLLHRDLKSKNILLDISRNQIKLCDFGFARVGSQYSNGSDSSSSEDESDSECVNGAAGGGGDDVYKNNGNGKPANYRLRRMSICGTPSFMPPEILLQQKYDWSVDVFSFGILCTELITLKRPGKDYWVRSQNNGFDINIEELNVNIPSPNDCPIQFYDLALKCCSYKHTNRPMFSTIVTILESIKLQLELFENQQQQQQLQQQQQLQQQQQQQQQQQQQQQQQLQLQQQQSSESSSSSSSQPLVNNNNNNSNCNNNNFNNSSNNNNSIANNDSISNVSTTTTSIPTTTTTTTTTTTTTNNITAINGTSNKYLQPLSKHQQQQQRNQNSSIIDNNSLIGSSNTESMITSFSISTFKERKKQSLNKLIRANTINILIGQQQQQQQQQQQQQQQQQDNQSSSQNQLIEREGVIKLDTTKYPNGWKEFGIDNSTNKIWIIYQSNIIKIGSNNNNNLIEMTCGTIIKLKKHSITLSIVDSNLISGANIINVKSYLKDYPYVNKPIKVNQQQQQQQQIITNNYELNLIIKLQSRIRGWLVRRRYKIFLSNWKLNNSNTSQSNKNQWIRLFNQLISSELEYKKQLDQVIKSYLLPIQSKFRINKPLLNYKEIGSIFSNIESLSEIHNELLKIVNQISKSPFFIMNFENEKDDRSNQNNTSATTDIFGDSSIQFTNISINTKDSSNQINSITQFIVKNISQIKNQYGIYAFNFKYSTNIYNWCRLNPDFSIFCDTIRSQLNQQFPDQENDLASLLSLPINKIQKYLLVFEKLAQITPITHSEYKDIKSAFTLIRETSNYIQSQLEMSFEHSHIMSIDIMLQKKDNQSLMQSGRWFIRQGQFTELSSNKQYYLFLLSDICLITKPIKSKSSKYNNNNNINTNNNNNNLTSSATQTNSNKDLSTSINQSTSNANSDNSGNNNNNLINSKYYYRLKTIINLKEEVSMRINPDISNGVLFIGPNKTYKWLLPNDEEAKDWVNDFERTTILIYRNNPNGGGSNNNSIGGGGGGRGGSGNNSNNGSIDLTEINQIHHINNQAIPLSSSNNNITNNNSINNNIIMNNNNNNNKDTEGKGFIKRFRLSFSAGTSTPERKTSLVNMSPSTTSSLNNIDSNYNNNNNNVTNTPIKSVTSSPSIHYTPVNDNNQQPQLPSQPNEEFQFTVPTTPSDKKKKRGSFSSKLKRLSITFSKD</sequence>
<dbReference type="EC" id="2.7.11.1"/>
<dbReference type="EMBL" id="AAFI02000149">
    <property type="protein sequence ID" value="EAL62530.1"/>
    <property type="molecule type" value="Genomic_DNA"/>
</dbReference>
<dbReference type="RefSeq" id="XP_636021.1">
    <property type="nucleotide sequence ID" value="XM_630929.1"/>
</dbReference>
<dbReference type="SMR" id="Q54GY6"/>
<dbReference type="FunCoup" id="Q54GY6">
    <property type="interactions" value="623"/>
</dbReference>
<dbReference type="PaxDb" id="44689-DDB0229867"/>
<dbReference type="EnsemblProtists" id="EAL62530">
    <property type="protein sequence ID" value="EAL62530"/>
    <property type="gene ID" value="DDB_G0289859"/>
</dbReference>
<dbReference type="GeneID" id="8627347"/>
<dbReference type="KEGG" id="ddi:DDB_G0289859"/>
<dbReference type="dictyBase" id="DDB_G0289859">
    <property type="gene designation" value="kxcA"/>
</dbReference>
<dbReference type="VEuPathDB" id="AmoebaDB:DDB_G0289859"/>
<dbReference type="eggNOG" id="ENOG502RFNJ">
    <property type="taxonomic scope" value="Eukaryota"/>
</dbReference>
<dbReference type="HOGENOM" id="CLU_260725_0_0_1"/>
<dbReference type="InParanoid" id="Q54GY6"/>
<dbReference type="OMA" id="CKYTERE"/>
<dbReference type="PRO" id="PR:Q54GY6"/>
<dbReference type="Proteomes" id="UP000002195">
    <property type="component" value="Chromosome 5"/>
</dbReference>
<dbReference type="GO" id="GO:0005737">
    <property type="term" value="C:cytoplasm"/>
    <property type="evidence" value="ECO:0000318"/>
    <property type="project" value="GO_Central"/>
</dbReference>
<dbReference type="GO" id="GO:0005524">
    <property type="term" value="F:ATP binding"/>
    <property type="evidence" value="ECO:0007669"/>
    <property type="project" value="UniProtKB-KW"/>
</dbReference>
<dbReference type="GO" id="GO:0005096">
    <property type="term" value="F:GTPase activator activity"/>
    <property type="evidence" value="ECO:0007669"/>
    <property type="project" value="UniProtKB-KW"/>
</dbReference>
<dbReference type="GO" id="GO:0005085">
    <property type="term" value="F:guanyl-nucleotide exchange factor activity"/>
    <property type="evidence" value="ECO:0007669"/>
    <property type="project" value="InterPro"/>
</dbReference>
<dbReference type="GO" id="GO:0046872">
    <property type="term" value="F:metal ion binding"/>
    <property type="evidence" value="ECO:0007669"/>
    <property type="project" value="UniProtKB-KW"/>
</dbReference>
<dbReference type="GO" id="GO:0004672">
    <property type="term" value="F:protein kinase activity"/>
    <property type="evidence" value="ECO:0000318"/>
    <property type="project" value="GO_Central"/>
</dbReference>
<dbReference type="GO" id="GO:0106310">
    <property type="term" value="F:protein serine kinase activity"/>
    <property type="evidence" value="ECO:0007669"/>
    <property type="project" value="RHEA"/>
</dbReference>
<dbReference type="GO" id="GO:0004674">
    <property type="term" value="F:protein serine/threonine kinase activity"/>
    <property type="evidence" value="ECO:0007669"/>
    <property type="project" value="UniProtKB-KW"/>
</dbReference>
<dbReference type="GO" id="GO:0007165">
    <property type="term" value="P:signal transduction"/>
    <property type="evidence" value="ECO:0000318"/>
    <property type="project" value="GO_Central"/>
</dbReference>
<dbReference type="Gene3D" id="1.20.900.10">
    <property type="entry name" value="Dbl homology (DH) domain"/>
    <property type="match status" value="1"/>
</dbReference>
<dbReference type="Gene3D" id="3.30.200.20">
    <property type="entry name" value="Phosphorylase Kinase, domain 1"/>
    <property type="match status" value="1"/>
</dbReference>
<dbReference type="Gene3D" id="2.30.29.30">
    <property type="entry name" value="Pleckstrin-homology domain (PH domain)/Phosphotyrosine-binding domain (PTB)"/>
    <property type="match status" value="1"/>
</dbReference>
<dbReference type="Gene3D" id="1.10.510.10">
    <property type="entry name" value="Transferase(Phosphotransferase) domain 1"/>
    <property type="match status" value="1"/>
</dbReference>
<dbReference type="InterPro" id="IPR050940">
    <property type="entry name" value="Actin_reg-Ser/Thr_kinase"/>
</dbReference>
<dbReference type="InterPro" id="IPR035899">
    <property type="entry name" value="DBL_dom_sf"/>
</dbReference>
<dbReference type="InterPro" id="IPR000219">
    <property type="entry name" value="DH_dom"/>
</dbReference>
<dbReference type="InterPro" id="IPR000048">
    <property type="entry name" value="IQ_motif_EF-hand-BS"/>
</dbReference>
<dbReference type="InterPro" id="IPR011009">
    <property type="entry name" value="Kinase-like_dom_sf"/>
</dbReference>
<dbReference type="InterPro" id="IPR011993">
    <property type="entry name" value="PH-like_dom_sf"/>
</dbReference>
<dbReference type="InterPro" id="IPR000719">
    <property type="entry name" value="Prot_kinase_dom"/>
</dbReference>
<dbReference type="InterPro" id="IPR017441">
    <property type="entry name" value="Protein_kinase_ATP_BS"/>
</dbReference>
<dbReference type="InterPro" id="IPR001245">
    <property type="entry name" value="Ser-Thr/Tyr_kinase_cat_dom"/>
</dbReference>
<dbReference type="InterPro" id="IPR008271">
    <property type="entry name" value="Ser/Thr_kinase_AS"/>
</dbReference>
<dbReference type="PANTHER" id="PTHR46485:SF5">
    <property type="entry name" value="CENTER DIVIDER, ISOFORM A"/>
    <property type="match status" value="1"/>
</dbReference>
<dbReference type="PANTHER" id="PTHR46485">
    <property type="entry name" value="LIM DOMAIN KINASE 1"/>
    <property type="match status" value="1"/>
</dbReference>
<dbReference type="Pfam" id="PF00612">
    <property type="entry name" value="IQ"/>
    <property type="match status" value="1"/>
</dbReference>
<dbReference type="Pfam" id="PF07714">
    <property type="entry name" value="PK_Tyr_Ser-Thr"/>
    <property type="match status" value="2"/>
</dbReference>
<dbReference type="Pfam" id="PF00621">
    <property type="entry name" value="RhoGEF"/>
    <property type="match status" value="1"/>
</dbReference>
<dbReference type="SMART" id="SM00015">
    <property type="entry name" value="IQ"/>
    <property type="match status" value="1"/>
</dbReference>
<dbReference type="SMART" id="SM00325">
    <property type="entry name" value="RhoGEF"/>
    <property type="match status" value="1"/>
</dbReference>
<dbReference type="SMART" id="SM00220">
    <property type="entry name" value="S_TKc"/>
    <property type="match status" value="1"/>
</dbReference>
<dbReference type="SUPFAM" id="SSF48065">
    <property type="entry name" value="DBL homology domain (DH-domain)"/>
    <property type="match status" value="1"/>
</dbReference>
<dbReference type="SUPFAM" id="SSF50729">
    <property type="entry name" value="PH domain-like"/>
    <property type="match status" value="1"/>
</dbReference>
<dbReference type="SUPFAM" id="SSF56112">
    <property type="entry name" value="Protein kinase-like (PK-like)"/>
    <property type="match status" value="1"/>
</dbReference>
<dbReference type="PROSITE" id="PS50010">
    <property type="entry name" value="DH_2"/>
    <property type="match status" value="1"/>
</dbReference>
<dbReference type="PROSITE" id="PS50096">
    <property type="entry name" value="IQ"/>
    <property type="match status" value="1"/>
</dbReference>
<dbReference type="PROSITE" id="PS00107">
    <property type="entry name" value="PROTEIN_KINASE_ATP"/>
    <property type="match status" value="1"/>
</dbReference>
<dbReference type="PROSITE" id="PS50011">
    <property type="entry name" value="PROTEIN_KINASE_DOM"/>
    <property type="match status" value="1"/>
</dbReference>
<dbReference type="PROSITE" id="PS00108">
    <property type="entry name" value="PROTEIN_KINASE_ST"/>
    <property type="match status" value="1"/>
</dbReference>
<gene>
    <name type="primary">kxcA</name>
    <name type="synonym">RacGEF</name>
    <name type="ORF">DDB_G0289859</name>
</gene>
<accession>Q54GY6</accession>
<comment type="catalytic activity">
    <reaction>
        <text>L-seryl-[protein] + ATP = O-phospho-L-seryl-[protein] + ADP + H(+)</text>
        <dbReference type="Rhea" id="RHEA:17989"/>
        <dbReference type="Rhea" id="RHEA-COMP:9863"/>
        <dbReference type="Rhea" id="RHEA-COMP:11604"/>
        <dbReference type="ChEBI" id="CHEBI:15378"/>
        <dbReference type="ChEBI" id="CHEBI:29999"/>
        <dbReference type="ChEBI" id="CHEBI:30616"/>
        <dbReference type="ChEBI" id="CHEBI:83421"/>
        <dbReference type="ChEBI" id="CHEBI:456216"/>
        <dbReference type="EC" id="2.7.11.1"/>
    </reaction>
</comment>
<comment type="catalytic activity">
    <reaction>
        <text>L-threonyl-[protein] + ATP = O-phospho-L-threonyl-[protein] + ADP + H(+)</text>
        <dbReference type="Rhea" id="RHEA:46608"/>
        <dbReference type="Rhea" id="RHEA-COMP:11060"/>
        <dbReference type="Rhea" id="RHEA-COMP:11605"/>
        <dbReference type="ChEBI" id="CHEBI:15378"/>
        <dbReference type="ChEBI" id="CHEBI:30013"/>
        <dbReference type="ChEBI" id="CHEBI:30616"/>
        <dbReference type="ChEBI" id="CHEBI:61977"/>
        <dbReference type="ChEBI" id="CHEBI:456216"/>
        <dbReference type="EC" id="2.7.11.1"/>
    </reaction>
</comment>
<comment type="cofactor">
    <cofactor evidence="1">
        <name>Mg(2+)</name>
        <dbReference type="ChEBI" id="CHEBI:18420"/>
    </cofactor>
</comment>
<comment type="similarity">
    <text evidence="7">Belongs to the protein kinase superfamily. TKL Ser/Thr protein kinase family.</text>
</comment>
<organism>
    <name type="scientific">Dictyostelium discoideum</name>
    <name type="common">Social amoeba</name>
    <dbReference type="NCBI Taxonomy" id="44689"/>
    <lineage>
        <taxon>Eukaryota</taxon>
        <taxon>Amoebozoa</taxon>
        <taxon>Evosea</taxon>
        <taxon>Eumycetozoa</taxon>
        <taxon>Dictyostelia</taxon>
        <taxon>Dictyosteliales</taxon>
        <taxon>Dictyosteliaceae</taxon>
        <taxon>Dictyostelium</taxon>
    </lineage>
</organism>
<name>KXCA_DICDI</name>
<reference key="1">
    <citation type="journal article" date="2005" name="Nature">
        <title>The genome of the social amoeba Dictyostelium discoideum.</title>
        <authorList>
            <person name="Eichinger L."/>
            <person name="Pachebat J.A."/>
            <person name="Gloeckner G."/>
            <person name="Rajandream M.A."/>
            <person name="Sucgang R."/>
            <person name="Berriman M."/>
            <person name="Song J."/>
            <person name="Olsen R."/>
            <person name="Szafranski K."/>
            <person name="Xu Q."/>
            <person name="Tunggal B."/>
            <person name="Kummerfeld S."/>
            <person name="Madera M."/>
            <person name="Konfortov B.A."/>
            <person name="Rivero F."/>
            <person name="Bankier A.T."/>
            <person name="Lehmann R."/>
            <person name="Hamlin N."/>
            <person name="Davies R."/>
            <person name="Gaudet P."/>
            <person name="Fey P."/>
            <person name="Pilcher K."/>
            <person name="Chen G."/>
            <person name="Saunders D."/>
            <person name="Sodergren E.J."/>
            <person name="Davis P."/>
            <person name="Kerhornou A."/>
            <person name="Nie X."/>
            <person name="Hall N."/>
            <person name="Anjard C."/>
            <person name="Hemphill L."/>
            <person name="Bason N."/>
            <person name="Farbrother P."/>
            <person name="Desany B."/>
            <person name="Just E."/>
            <person name="Morio T."/>
            <person name="Rost R."/>
            <person name="Churcher C.M."/>
            <person name="Cooper J."/>
            <person name="Haydock S."/>
            <person name="van Driessche N."/>
            <person name="Cronin A."/>
            <person name="Goodhead I."/>
            <person name="Muzny D.M."/>
            <person name="Mourier T."/>
            <person name="Pain A."/>
            <person name="Lu M."/>
            <person name="Harper D."/>
            <person name="Lindsay R."/>
            <person name="Hauser H."/>
            <person name="James K.D."/>
            <person name="Quiles M."/>
            <person name="Madan Babu M."/>
            <person name="Saito T."/>
            <person name="Buchrieser C."/>
            <person name="Wardroper A."/>
            <person name="Felder M."/>
            <person name="Thangavelu M."/>
            <person name="Johnson D."/>
            <person name="Knights A."/>
            <person name="Loulseged H."/>
            <person name="Mungall K.L."/>
            <person name="Oliver K."/>
            <person name="Price C."/>
            <person name="Quail M.A."/>
            <person name="Urushihara H."/>
            <person name="Hernandez J."/>
            <person name="Rabbinowitsch E."/>
            <person name="Steffen D."/>
            <person name="Sanders M."/>
            <person name="Ma J."/>
            <person name="Kohara Y."/>
            <person name="Sharp S."/>
            <person name="Simmonds M.N."/>
            <person name="Spiegler S."/>
            <person name="Tivey A."/>
            <person name="Sugano S."/>
            <person name="White B."/>
            <person name="Walker D."/>
            <person name="Woodward J.R."/>
            <person name="Winckler T."/>
            <person name="Tanaka Y."/>
            <person name="Shaulsky G."/>
            <person name="Schleicher M."/>
            <person name="Weinstock G.M."/>
            <person name="Rosenthal A."/>
            <person name="Cox E.C."/>
            <person name="Chisholm R.L."/>
            <person name="Gibbs R.A."/>
            <person name="Loomis W.F."/>
            <person name="Platzer M."/>
            <person name="Kay R.R."/>
            <person name="Williams J.G."/>
            <person name="Dear P.H."/>
            <person name="Noegel A.A."/>
            <person name="Barrell B.G."/>
            <person name="Kuspa A."/>
        </authorList>
    </citation>
    <scope>NUCLEOTIDE SEQUENCE [LARGE SCALE GENOMIC DNA]</scope>
    <source>
        <strain>AX4</strain>
    </source>
</reference>
<reference key="2">
    <citation type="journal article" date="2006" name="Eur. J. Cell Biol.">
        <title>Rho GTPase signaling in Dictyostelium discoideum: insights from the genome.</title>
        <authorList>
            <person name="Vlahou G."/>
            <person name="Rivero F."/>
        </authorList>
    </citation>
    <scope>IDENTIFICATION</scope>
</reference>
<keyword id="KW-0067">ATP-binding</keyword>
<keyword id="KW-0343">GTPase activation</keyword>
<keyword id="KW-0418">Kinase</keyword>
<keyword id="KW-0460">Magnesium</keyword>
<keyword id="KW-0479">Metal-binding</keyword>
<keyword id="KW-0547">Nucleotide-binding</keyword>
<keyword id="KW-1185">Reference proteome</keyword>
<keyword id="KW-0723">Serine/threonine-protein kinase</keyword>
<keyword id="KW-0808">Transferase</keyword>
<evidence type="ECO:0000250" key="1"/>
<evidence type="ECO:0000255" key="2">
    <source>
        <dbReference type="PROSITE-ProRule" id="PRU00062"/>
    </source>
</evidence>
<evidence type="ECO:0000255" key="3">
    <source>
        <dbReference type="PROSITE-ProRule" id="PRU00116"/>
    </source>
</evidence>
<evidence type="ECO:0000255" key="4">
    <source>
        <dbReference type="PROSITE-ProRule" id="PRU00159"/>
    </source>
</evidence>
<evidence type="ECO:0000255" key="5">
    <source>
        <dbReference type="PROSITE-ProRule" id="PRU10027"/>
    </source>
</evidence>
<evidence type="ECO:0000256" key="6">
    <source>
        <dbReference type="SAM" id="MobiDB-lite"/>
    </source>
</evidence>
<evidence type="ECO:0000305" key="7"/>
<feature type="chain" id="PRO_0000354062" description="Kinase and exchange factor for Rac A">
    <location>
        <begin position="1"/>
        <end position="1311"/>
    </location>
</feature>
<feature type="domain" description="Protein kinase" evidence="4">
    <location>
        <begin position="18"/>
        <end position="316"/>
    </location>
</feature>
<feature type="domain" description="IQ" evidence="3">
    <location>
        <begin position="650"/>
        <end position="679"/>
    </location>
</feature>
<feature type="domain" description="DH" evidence="2">
    <location>
        <begin position="691"/>
        <end position="927"/>
    </location>
</feature>
<feature type="region of interest" description="Disordered" evidence="6">
    <location>
        <begin position="169"/>
        <end position="201"/>
    </location>
</feature>
<feature type="region of interest" description="Disordered" evidence="6">
    <location>
        <begin position="360"/>
        <end position="426"/>
    </location>
</feature>
<feature type="region of interest" description="Disordered" evidence="6">
    <location>
        <begin position="446"/>
        <end position="471"/>
    </location>
</feature>
<feature type="region of interest" description="Disordered" evidence="6">
    <location>
        <begin position="994"/>
        <end position="1044"/>
    </location>
</feature>
<feature type="region of interest" description="Disordered" evidence="6">
    <location>
        <begin position="1114"/>
        <end position="1145"/>
    </location>
</feature>
<feature type="region of interest" description="Disordered" evidence="6">
    <location>
        <begin position="1208"/>
        <end position="1311"/>
    </location>
</feature>
<feature type="compositionally biased region" description="Low complexity" evidence="6">
    <location>
        <begin position="451"/>
        <end position="471"/>
    </location>
</feature>
<feature type="compositionally biased region" description="Low complexity" evidence="6">
    <location>
        <begin position="994"/>
        <end position="1021"/>
    </location>
</feature>
<feature type="compositionally biased region" description="Low complexity" evidence="6">
    <location>
        <begin position="1031"/>
        <end position="1044"/>
    </location>
</feature>
<feature type="compositionally biased region" description="Gly residues" evidence="6">
    <location>
        <begin position="1117"/>
        <end position="1137"/>
    </location>
</feature>
<feature type="compositionally biased region" description="Polar residues" evidence="6">
    <location>
        <begin position="1208"/>
        <end position="1229"/>
    </location>
</feature>
<feature type="compositionally biased region" description="Low complexity" evidence="6">
    <location>
        <begin position="1230"/>
        <end position="1245"/>
    </location>
</feature>
<feature type="compositionally biased region" description="Polar residues" evidence="6">
    <location>
        <begin position="1246"/>
        <end position="1257"/>
    </location>
</feature>
<feature type="compositionally biased region" description="Low complexity" evidence="6">
    <location>
        <begin position="1263"/>
        <end position="1276"/>
    </location>
</feature>
<feature type="compositionally biased region" description="Polar residues" evidence="6">
    <location>
        <begin position="1277"/>
        <end position="1287"/>
    </location>
</feature>
<feature type="compositionally biased region" description="Basic residues" evidence="6">
    <location>
        <begin position="1290"/>
        <end position="1303"/>
    </location>
</feature>
<feature type="active site" description="Proton acceptor" evidence="4 5">
    <location>
        <position position="138"/>
    </location>
</feature>
<feature type="binding site" evidence="4">
    <location>
        <begin position="24"/>
        <end position="32"/>
    </location>
    <ligand>
        <name>ATP</name>
        <dbReference type="ChEBI" id="CHEBI:30616"/>
    </ligand>
</feature>
<feature type="binding site" evidence="4">
    <location>
        <position position="45"/>
    </location>
    <ligand>
        <name>ATP</name>
        <dbReference type="ChEBI" id="CHEBI:30616"/>
    </ligand>
</feature>